<name>IF1_NITOC</name>
<gene>
    <name evidence="1" type="primary">infA</name>
    <name type="ordered locus">Noc_2598</name>
</gene>
<organism>
    <name type="scientific">Nitrosococcus oceani (strain ATCC 19707 / BCRC 17464 / JCM 30415 / NCIMB 11848 / C-107)</name>
    <dbReference type="NCBI Taxonomy" id="323261"/>
    <lineage>
        <taxon>Bacteria</taxon>
        <taxon>Pseudomonadati</taxon>
        <taxon>Pseudomonadota</taxon>
        <taxon>Gammaproteobacteria</taxon>
        <taxon>Chromatiales</taxon>
        <taxon>Chromatiaceae</taxon>
        <taxon>Nitrosococcus</taxon>
    </lineage>
</organism>
<dbReference type="EMBL" id="CP000127">
    <property type="protein sequence ID" value="ABA59051.1"/>
    <property type="molecule type" value="Genomic_DNA"/>
</dbReference>
<dbReference type="RefSeq" id="WP_004269147.1">
    <property type="nucleotide sequence ID" value="NC_007484.1"/>
</dbReference>
<dbReference type="SMR" id="Q3J7Z5"/>
<dbReference type="FunCoup" id="Q3J7Z5">
    <property type="interactions" value="443"/>
</dbReference>
<dbReference type="STRING" id="323261.Noc_2598"/>
<dbReference type="KEGG" id="noc:Noc_2598"/>
<dbReference type="eggNOG" id="COG0361">
    <property type="taxonomic scope" value="Bacteria"/>
</dbReference>
<dbReference type="HOGENOM" id="CLU_151267_1_0_6"/>
<dbReference type="InParanoid" id="Q3J7Z5"/>
<dbReference type="Proteomes" id="UP000006838">
    <property type="component" value="Chromosome"/>
</dbReference>
<dbReference type="GO" id="GO:0005829">
    <property type="term" value="C:cytosol"/>
    <property type="evidence" value="ECO:0007669"/>
    <property type="project" value="TreeGrafter"/>
</dbReference>
<dbReference type="GO" id="GO:0043022">
    <property type="term" value="F:ribosome binding"/>
    <property type="evidence" value="ECO:0007669"/>
    <property type="project" value="UniProtKB-UniRule"/>
</dbReference>
<dbReference type="GO" id="GO:0019843">
    <property type="term" value="F:rRNA binding"/>
    <property type="evidence" value="ECO:0007669"/>
    <property type="project" value="UniProtKB-UniRule"/>
</dbReference>
<dbReference type="GO" id="GO:0003743">
    <property type="term" value="F:translation initiation factor activity"/>
    <property type="evidence" value="ECO:0007669"/>
    <property type="project" value="UniProtKB-UniRule"/>
</dbReference>
<dbReference type="CDD" id="cd04451">
    <property type="entry name" value="S1_IF1"/>
    <property type="match status" value="1"/>
</dbReference>
<dbReference type="FunFam" id="2.40.50.140:FF:000002">
    <property type="entry name" value="Translation initiation factor IF-1"/>
    <property type="match status" value="1"/>
</dbReference>
<dbReference type="Gene3D" id="2.40.50.140">
    <property type="entry name" value="Nucleic acid-binding proteins"/>
    <property type="match status" value="1"/>
</dbReference>
<dbReference type="HAMAP" id="MF_00075">
    <property type="entry name" value="IF_1"/>
    <property type="match status" value="1"/>
</dbReference>
<dbReference type="InterPro" id="IPR012340">
    <property type="entry name" value="NA-bd_OB-fold"/>
</dbReference>
<dbReference type="InterPro" id="IPR006196">
    <property type="entry name" value="RNA-binding_domain_S1_IF1"/>
</dbReference>
<dbReference type="InterPro" id="IPR003029">
    <property type="entry name" value="S1_domain"/>
</dbReference>
<dbReference type="InterPro" id="IPR004368">
    <property type="entry name" value="TIF_IF1"/>
</dbReference>
<dbReference type="NCBIfam" id="TIGR00008">
    <property type="entry name" value="infA"/>
    <property type="match status" value="1"/>
</dbReference>
<dbReference type="PANTHER" id="PTHR33370">
    <property type="entry name" value="TRANSLATION INITIATION FACTOR IF-1, CHLOROPLASTIC"/>
    <property type="match status" value="1"/>
</dbReference>
<dbReference type="PANTHER" id="PTHR33370:SF1">
    <property type="entry name" value="TRANSLATION INITIATION FACTOR IF-1, CHLOROPLASTIC"/>
    <property type="match status" value="1"/>
</dbReference>
<dbReference type="Pfam" id="PF01176">
    <property type="entry name" value="eIF-1a"/>
    <property type="match status" value="1"/>
</dbReference>
<dbReference type="SMART" id="SM00316">
    <property type="entry name" value="S1"/>
    <property type="match status" value="1"/>
</dbReference>
<dbReference type="SUPFAM" id="SSF50249">
    <property type="entry name" value="Nucleic acid-binding proteins"/>
    <property type="match status" value="1"/>
</dbReference>
<dbReference type="PROSITE" id="PS50832">
    <property type="entry name" value="S1_IF1_TYPE"/>
    <property type="match status" value="1"/>
</dbReference>
<feature type="chain" id="PRO_0000263829" description="Translation initiation factor IF-1">
    <location>
        <begin position="1"/>
        <end position="72"/>
    </location>
</feature>
<feature type="domain" description="S1-like" evidence="1">
    <location>
        <begin position="1"/>
        <end position="72"/>
    </location>
</feature>
<comment type="function">
    <text evidence="1">One of the essential components for the initiation of protein synthesis. Stabilizes the binding of IF-2 and IF-3 on the 30S subunit to which N-formylmethionyl-tRNA(fMet) subsequently binds. Helps modulate mRNA selection, yielding the 30S pre-initiation complex (PIC). Upon addition of the 50S ribosomal subunit IF-1, IF-2 and IF-3 are released leaving the mature 70S translation initiation complex.</text>
</comment>
<comment type="subunit">
    <text evidence="1">Component of the 30S ribosomal translation pre-initiation complex which assembles on the 30S ribosome in the order IF-2 and IF-3, IF-1 and N-formylmethionyl-tRNA(fMet); mRNA recruitment can occur at any time during PIC assembly.</text>
</comment>
<comment type="subcellular location">
    <subcellularLocation>
        <location evidence="1">Cytoplasm</location>
    </subcellularLocation>
</comment>
<comment type="similarity">
    <text evidence="1">Belongs to the IF-1 family.</text>
</comment>
<protein>
    <recommendedName>
        <fullName evidence="1">Translation initiation factor IF-1</fullName>
    </recommendedName>
</protein>
<accession>Q3J7Z5</accession>
<sequence>MAKEDSIEMEGTVVDTLPNTMFRVELENGHVITAHISGKMRKHYIRILTGDKVTVQLTPYDLSKGRIVYRAR</sequence>
<keyword id="KW-0963">Cytoplasm</keyword>
<keyword id="KW-0396">Initiation factor</keyword>
<keyword id="KW-0648">Protein biosynthesis</keyword>
<keyword id="KW-1185">Reference proteome</keyword>
<keyword id="KW-0694">RNA-binding</keyword>
<keyword id="KW-0699">rRNA-binding</keyword>
<reference key="1">
    <citation type="journal article" date="2006" name="Appl. Environ. Microbiol.">
        <title>Complete genome sequence of the marine, chemolithoautotrophic, ammonia-oxidizing bacterium Nitrosococcus oceani ATCC 19707.</title>
        <authorList>
            <person name="Klotz M.G."/>
            <person name="Arp D.J."/>
            <person name="Chain P.S.G."/>
            <person name="El-Sheikh A.F."/>
            <person name="Hauser L.J."/>
            <person name="Hommes N.G."/>
            <person name="Larimer F.W."/>
            <person name="Malfatti S.A."/>
            <person name="Norton J.M."/>
            <person name="Poret-Peterson A.T."/>
            <person name="Vergez L.M."/>
            <person name="Ward B.B."/>
        </authorList>
    </citation>
    <scope>NUCLEOTIDE SEQUENCE [LARGE SCALE GENOMIC DNA]</scope>
    <source>
        <strain>ATCC 19707 / BCRC 17464 / JCM 30415 / NCIMB 11848 / C-107</strain>
    </source>
</reference>
<evidence type="ECO:0000255" key="1">
    <source>
        <dbReference type="HAMAP-Rule" id="MF_00075"/>
    </source>
</evidence>
<proteinExistence type="inferred from homology"/>